<protein>
    <recommendedName>
        <fullName evidence="1">Glycerol-3-phosphate dehydrogenase [NAD(P)+]</fullName>
        <ecNumber evidence="1">1.1.1.94</ecNumber>
    </recommendedName>
    <alternativeName>
        <fullName evidence="1">NAD(P)(+)-dependent glycerol-3-phosphate dehydrogenase</fullName>
    </alternativeName>
    <alternativeName>
        <fullName evidence="1">NAD(P)H-dependent dihydroxyacetone-phosphate reductase</fullName>
    </alternativeName>
</protein>
<accession>P61748</accession>
<gene>
    <name evidence="1" type="primary">gpsA</name>
    <name type="ordered locus">TDE_2090</name>
</gene>
<comment type="function">
    <text evidence="1">Catalyzes the reduction of the glycolytic intermediate dihydroxyacetone phosphate (DHAP) to sn-glycerol 3-phosphate (G3P), the key precursor for phospholipid synthesis.</text>
</comment>
<comment type="catalytic activity">
    <reaction evidence="1">
        <text>sn-glycerol 3-phosphate + NAD(+) = dihydroxyacetone phosphate + NADH + H(+)</text>
        <dbReference type="Rhea" id="RHEA:11092"/>
        <dbReference type="ChEBI" id="CHEBI:15378"/>
        <dbReference type="ChEBI" id="CHEBI:57540"/>
        <dbReference type="ChEBI" id="CHEBI:57597"/>
        <dbReference type="ChEBI" id="CHEBI:57642"/>
        <dbReference type="ChEBI" id="CHEBI:57945"/>
        <dbReference type="EC" id="1.1.1.94"/>
    </reaction>
    <physiologicalReaction direction="right-to-left" evidence="1">
        <dbReference type="Rhea" id="RHEA:11094"/>
    </physiologicalReaction>
</comment>
<comment type="catalytic activity">
    <reaction evidence="1">
        <text>sn-glycerol 3-phosphate + NADP(+) = dihydroxyacetone phosphate + NADPH + H(+)</text>
        <dbReference type="Rhea" id="RHEA:11096"/>
        <dbReference type="ChEBI" id="CHEBI:15378"/>
        <dbReference type="ChEBI" id="CHEBI:57597"/>
        <dbReference type="ChEBI" id="CHEBI:57642"/>
        <dbReference type="ChEBI" id="CHEBI:57783"/>
        <dbReference type="ChEBI" id="CHEBI:58349"/>
        <dbReference type="EC" id="1.1.1.94"/>
    </reaction>
    <physiologicalReaction direction="right-to-left" evidence="1">
        <dbReference type="Rhea" id="RHEA:11098"/>
    </physiologicalReaction>
</comment>
<comment type="pathway">
    <text evidence="1">Membrane lipid metabolism; glycerophospholipid metabolism.</text>
</comment>
<comment type="subcellular location">
    <subcellularLocation>
        <location evidence="1">Cytoplasm</location>
    </subcellularLocation>
</comment>
<comment type="similarity">
    <text evidence="1">Belongs to the NAD-dependent glycerol-3-phosphate dehydrogenase family.</text>
</comment>
<dbReference type="EC" id="1.1.1.94" evidence="1"/>
<dbReference type="EMBL" id="AE017226">
    <property type="protein sequence ID" value="AAS12610.1"/>
    <property type="molecule type" value="Genomic_DNA"/>
</dbReference>
<dbReference type="RefSeq" id="NP_972691.1">
    <property type="nucleotide sequence ID" value="NC_002967.9"/>
</dbReference>
<dbReference type="RefSeq" id="WP_002679888.1">
    <property type="nucleotide sequence ID" value="NC_002967.9"/>
</dbReference>
<dbReference type="SMR" id="P61748"/>
<dbReference type="STRING" id="243275.TDE_2090"/>
<dbReference type="PaxDb" id="243275-TDE_2090"/>
<dbReference type="GeneID" id="2740329"/>
<dbReference type="KEGG" id="tde:TDE_2090"/>
<dbReference type="PATRIC" id="fig|243275.7.peg.1974"/>
<dbReference type="eggNOG" id="COG0240">
    <property type="taxonomic scope" value="Bacteria"/>
</dbReference>
<dbReference type="HOGENOM" id="CLU_033449_0_0_12"/>
<dbReference type="OrthoDB" id="9812273at2"/>
<dbReference type="UniPathway" id="UPA00940"/>
<dbReference type="Proteomes" id="UP000008212">
    <property type="component" value="Chromosome"/>
</dbReference>
<dbReference type="GO" id="GO:0005829">
    <property type="term" value="C:cytosol"/>
    <property type="evidence" value="ECO:0007669"/>
    <property type="project" value="TreeGrafter"/>
</dbReference>
<dbReference type="GO" id="GO:0047952">
    <property type="term" value="F:glycerol-3-phosphate dehydrogenase [NAD(P)+] activity"/>
    <property type="evidence" value="ECO:0007669"/>
    <property type="project" value="UniProtKB-UniRule"/>
</dbReference>
<dbReference type="GO" id="GO:0051287">
    <property type="term" value="F:NAD binding"/>
    <property type="evidence" value="ECO:0007669"/>
    <property type="project" value="InterPro"/>
</dbReference>
<dbReference type="GO" id="GO:0005975">
    <property type="term" value="P:carbohydrate metabolic process"/>
    <property type="evidence" value="ECO:0007669"/>
    <property type="project" value="InterPro"/>
</dbReference>
<dbReference type="GO" id="GO:0046167">
    <property type="term" value="P:glycerol-3-phosphate biosynthetic process"/>
    <property type="evidence" value="ECO:0007669"/>
    <property type="project" value="UniProtKB-UniRule"/>
</dbReference>
<dbReference type="GO" id="GO:0046168">
    <property type="term" value="P:glycerol-3-phosphate catabolic process"/>
    <property type="evidence" value="ECO:0007669"/>
    <property type="project" value="InterPro"/>
</dbReference>
<dbReference type="GO" id="GO:0006650">
    <property type="term" value="P:glycerophospholipid metabolic process"/>
    <property type="evidence" value="ECO:0007669"/>
    <property type="project" value="UniProtKB-UniRule"/>
</dbReference>
<dbReference type="GO" id="GO:0008654">
    <property type="term" value="P:phospholipid biosynthetic process"/>
    <property type="evidence" value="ECO:0007669"/>
    <property type="project" value="UniProtKB-KW"/>
</dbReference>
<dbReference type="Gene3D" id="1.10.1040.10">
    <property type="entry name" value="N-(1-d-carboxylethyl)-l-norvaline Dehydrogenase, domain 2"/>
    <property type="match status" value="1"/>
</dbReference>
<dbReference type="Gene3D" id="3.40.50.720">
    <property type="entry name" value="NAD(P)-binding Rossmann-like Domain"/>
    <property type="match status" value="1"/>
</dbReference>
<dbReference type="HAMAP" id="MF_00394">
    <property type="entry name" value="NAD_Glyc3P_dehydrog"/>
    <property type="match status" value="1"/>
</dbReference>
<dbReference type="InterPro" id="IPR008927">
    <property type="entry name" value="6-PGluconate_DH-like_C_sf"/>
</dbReference>
<dbReference type="InterPro" id="IPR013328">
    <property type="entry name" value="6PGD_dom2"/>
</dbReference>
<dbReference type="InterPro" id="IPR006168">
    <property type="entry name" value="G3P_DH_NAD-dep"/>
</dbReference>
<dbReference type="InterPro" id="IPR006109">
    <property type="entry name" value="G3P_DH_NAD-dep_C"/>
</dbReference>
<dbReference type="InterPro" id="IPR011128">
    <property type="entry name" value="G3P_DH_NAD-dep_N"/>
</dbReference>
<dbReference type="InterPro" id="IPR036291">
    <property type="entry name" value="NAD(P)-bd_dom_sf"/>
</dbReference>
<dbReference type="NCBIfam" id="NF000940">
    <property type="entry name" value="PRK00094.1-2"/>
    <property type="match status" value="1"/>
</dbReference>
<dbReference type="NCBIfam" id="NF000942">
    <property type="entry name" value="PRK00094.1-4"/>
    <property type="match status" value="1"/>
</dbReference>
<dbReference type="NCBIfam" id="NF000945">
    <property type="entry name" value="PRK00094.2-3"/>
    <property type="match status" value="1"/>
</dbReference>
<dbReference type="PANTHER" id="PTHR11728">
    <property type="entry name" value="GLYCEROL-3-PHOSPHATE DEHYDROGENASE"/>
    <property type="match status" value="1"/>
</dbReference>
<dbReference type="PANTHER" id="PTHR11728:SF1">
    <property type="entry name" value="GLYCEROL-3-PHOSPHATE DEHYDROGENASE [NAD(+)] 2, CHLOROPLASTIC"/>
    <property type="match status" value="1"/>
</dbReference>
<dbReference type="Pfam" id="PF07479">
    <property type="entry name" value="NAD_Gly3P_dh_C"/>
    <property type="match status" value="1"/>
</dbReference>
<dbReference type="Pfam" id="PF01210">
    <property type="entry name" value="NAD_Gly3P_dh_N"/>
    <property type="match status" value="1"/>
</dbReference>
<dbReference type="PIRSF" id="PIRSF000114">
    <property type="entry name" value="Glycerol-3-P_dh"/>
    <property type="match status" value="1"/>
</dbReference>
<dbReference type="PRINTS" id="PR00077">
    <property type="entry name" value="GPDHDRGNASE"/>
</dbReference>
<dbReference type="SUPFAM" id="SSF48179">
    <property type="entry name" value="6-phosphogluconate dehydrogenase C-terminal domain-like"/>
    <property type="match status" value="1"/>
</dbReference>
<dbReference type="SUPFAM" id="SSF51735">
    <property type="entry name" value="NAD(P)-binding Rossmann-fold domains"/>
    <property type="match status" value="1"/>
</dbReference>
<dbReference type="PROSITE" id="PS00957">
    <property type="entry name" value="NAD_G3PDH"/>
    <property type="match status" value="1"/>
</dbReference>
<sequence>MNDKIAIIGAGSWGTAVACSLGKNGHRVVLWSHTAGVADSINTEHINVKYLPKHKLPKTVSASTDMEEVCKDASFIFLASPSLYLTSAVEELLKFAPFSHDDGEMPYPTIAVLTKGFIPDENGEPQFIIDVLEKMLPDFYKNHLVYVAGPSHGEEVAEGKLTGLIAASQNPMCSIRCREILRSRSLLVYSSLDIIGVQVCAAAKNVVAVAFGVLDALTVTSDIFGDNTESLLLAAGLNEIQTIGRAMGATHPETFTSISGVGDLDVTCRSKYGRNRRFGNEIITKKILLSFENLDDLIKNIDKIGYLPEGVVACKYLNILAEKRNLKLPICSGLYKILNKELKPLDLIENLLQGDTK</sequence>
<feature type="chain" id="PRO_0000138050" description="Glycerol-3-phosphate dehydrogenase [NAD(P)+]">
    <location>
        <begin position="1"/>
        <end position="357"/>
    </location>
</feature>
<feature type="active site" description="Proton acceptor" evidence="1">
    <location>
        <position position="204"/>
    </location>
</feature>
<feature type="binding site" evidence="1">
    <location>
        <position position="12"/>
    </location>
    <ligand>
        <name>NADPH</name>
        <dbReference type="ChEBI" id="CHEBI:57783"/>
    </ligand>
</feature>
<feature type="binding site" evidence="1">
    <location>
        <position position="13"/>
    </location>
    <ligand>
        <name>NADPH</name>
        <dbReference type="ChEBI" id="CHEBI:57783"/>
    </ligand>
</feature>
<feature type="binding site" evidence="1">
    <location>
        <position position="33"/>
    </location>
    <ligand>
        <name>NADPH</name>
        <dbReference type="ChEBI" id="CHEBI:57783"/>
    </ligand>
</feature>
<feature type="binding site" evidence="1">
    <location>
        <position position="115"/>
    </location>
    <ligand>
        <name>NADPH</name>
        <dbReference type="ChEBI" id="CHEBI:57783"/>
    </ligand>
</feature>
<feature type="binding site" evidence="1">
    <location>
        <position position="115"/>
    </location>
    <ligand>
        <name>sn-glycerol 3-phosphate</name>
        <dbReference type="ChEBI" id="CHEBI:57597"/>
    </ligand>
</feature>
<feature type="binding site" evidence="1">
    <location>
        <position position="149"/>
    </location>
    <ligand>
        <name>sn-glycerol 3-phosphate</name>
        <dbReference type="ChEBI" id="CHEBI:57597"/>
    </ligand>
</feature>
<feature type="binding site" evidence="1">
    <location>
        <position position="151"/>
    </location>
    <ligand>
        <name>sn-glycerol 3-phosphate</name>
        <dbReference type="ChEBI" id="CHEBI:57597"/>
    </ligand>
</feature>
<feature type="binding site" evidence="1">
    <location>
        <position position="153"/>
    </location>
    <ligand>
        <name>NADPH</name>
        <dbReference type="ChEBI" id="CHEBI:57783"/>
    </ligand>
</feature>
<feature type="binding site" evidence="1">
    <location>
        <position position="204"/>
    </location>
    <ligand>
        <name>sn-glycerol 3-phosphate</name>
        <dbReference type="ChEBI" id="CHEBI:57597"/>
    </ligand>
</feature>
<feature type="binding site" evidence="1">
    <location>
        <position position="263"/>
    </location>
    <ligand>
        <name>sn-glycerol 3-phosphate</name>
        <dbReference type="ChEBI" id="CHEBI:57597"/>
    </ligand>
</feature>
<feature type="binding site" evidence="1">
    <location>
        <position position="274"/>
    </location>
    <ligand>
        <name>NADPH</name>
        <dbReference type="ChEBI" id="CHEBI:57783"/>
    </ligand>
</feature>
<feature type="binding site" evidence="1">
    <location>
        <position position="274"/>
    </location>
    <ligand>
        <name>sn-glycerol 3-phosphate</name>
        <dbReference type="ChEBI" id="CHEBI:57597"/>
    </ligand>
</feature>
<feature type="binding site" evidence="1">
    <location>
        <position position="275"/>
    </location>
    <ligand>
        <name>sn-glycerol 3-phosphate</name>
        <dbReference type="ChEBI" id="CHEBI:57597"/>
    </ligand>
</feature>
<feature type="binding site" evidence="1">
    <location>
        <position position="307"/>
    </location>
    <ligand>
        <name>NADPH</name>
        <dbReference type="ChEBI" id="CHEBI:57783"/>
    </ligand>
</feature>
<feature type="binding site" evidence="1">
    <location>
        <position position="309"/>
    </location>
    <ligand>
        <name>NADPH</name>
        <dbReference type="ChEBI" id="CHEBI:57783"/>
    </ligand>
</feature>
<reference key="1">
    <citation type="journal article" date="2004" name="Proc. Natl. Acad. Sci. U.S.A.">
        <title>Comparison of the genome of the oral pathogen Treponema denticola with other spirochete genomes.</title>
        <authorList>
            <person name="Seshadri R."/>
            <person name="Myers G.S.A."/>
            <person name="Tettelin H."/>
            <person name="Eisen J.A."/>
            <person name="Heidelberg J.F."/>
            <person name="Dodson R.J."/>
            <person name="Davidsen T.M."/>
            <person name="DeBoy R.T."/>
            <person name="Fouts D.E."/>
            <person name="Haft D.H."/>
            <person name="Selengut J."/>
            <person name="Ren Q."/>
            <person name="Brinkac L.M."/>
            <person name="Madupu R."/>
            <person name="Kolonay J.F."/>
            <person name="Durkin S.A."/>
            <person name="Daugherty S.C."/>
            <person name="Shetty J."/>
            <person name="Shvartsbeyn A."/>
            <person name="Gebregeorgis E."/>
            <person name="Geer K."/>
            <person name="Tsegaye G."/>
            <person name="Malek J.A."/>
            <person name="Ayodeji B."/>
            <person name="Shatsman S."/>
            <person name="McLeod M.P."/>
            <person name="Smajs D."/>
            <person name="Howell J.K."/>
            <person name="Pal S."/>
            <person name="Amin A."/>
            <person name="Vashisth P."/>
            <person name="McNeill T.Z."/>
            <person name="Xiang Q."/>
            <person name="Sodergren E."/>
            <person name="Baca E."/>
            <person name="Weinstock G.M."/>
            <person name="Norris S.J."/>
            <person name="Fraser C.M."/>
            <person name="Paulsen I.T."/>
        </authorList>
    </citation>
    <scope>NUCLEOTIDE SEQUENCE [LARGE SCALE GENOMIC DNA]</scope>
    <source>
        <strain>ATCC 35405 / DSM 14222 / CIP 103919 / JCM 8153 / KCTC 15104</strain>
    </source>
</reference>
<name>GPDA_TREDE</name>
<evidence type="ECO:0000255" key="1">
    <source>
        <dbReference type="HAMAP-Rule" id="MF_00394"/>
    </source>
</evidence>
<proteinExistence type="inferred from homology"/>
<organism>
    <name type="scientific">Treponema denticola (strain ATCC 35405 / DSM 14222 / CIP 103919 / JCM 8153 / KCTC 15104)</name>
    <dbReference type="NCBI Taxonomy" id="243275"/>
    <lineage>
        <taxon>Bacteria</taxon>
        <taxon>Pseudomonadati</taxon>
        <taxon>Spirochaetota</taxon>
        <taxon>Spirochaetia</taxon>
        <taxon>Spirochaetales</taxon>
        <taxon>Treponemataceae</taxon>
        <taxon>Treponema</taxon>
    </lineage>
</organism>
<keyword id="KW-0963">Cytoplasm</keyword>
<keyword id="KW-0444">Lipid biosynthesis</keyword>
<keyword id="KW-0443">Lipid metabolism</keyword>
<keyword id="KW-0520">NAD</keyword>
<keyword id="KW-0521">NADP</keyword>
<keyword id="KW-0547">Nucleotide-binding</keyword>
<keyword id="KW-0560">Oxidoreductase</keyword>
<keyword id="KW-0594">Phospholipid biosynthesis</keyword>
<keyword id="KW-1208">Phospholipid metabolism</keyword>
<keyword id="KW-1185">Reference proteome</keyword>